<comment type="function">
    <text evidence="1">Catalyzes the NADPH-dependent reduction of N-acetyl-5-glutamyl phosphate to yield N-acetyl-L-glutamate 5-semialdehyde.</text>
</comment>
<comment type="catalytic activity">
    <reaction evidence="1">
        <text>N-acetyl-L-glutamate 5-semialdehyde + phosphate + NADP(+) = N-acetyl-L-glutamyl 5-phosphate + NADPH + H(+)</text>
        <dbReference type="Rhea" id="RHEA:21588"/>
        <dbReference type="ChEBI" id="CHEBI:15378"/>
        <dbReference type="ChEBI" id="CHEBI:29123"/>
        <dbReference type="ChEBI" id="CHEBI:43474"/>
        <dbReference type="ChEBI" id="CHEBI:57783"/>
        <dbReference type="ChEBI" id="CHEBI:57936"/>
        <dbReference type="ChEBI" id="CHEBI:58349"/>
        <dbReference type="EC" id="1.2.1.38"/>
    </reaction>
</comment>
<comment type="pathway">
    <text evidence="1">Amino-acid biosynthesis; L-arginine biosynthesis; N(2)-acetyl-L-ornithine from L-glutamate: step 3/4.</text>
</comment>
<comment type="subcellular location">
    <subcellularLocation>
        <location evidence="1">Cytoplasm</location>
    </subcellularLocation>
</comment>
<comment type="similarity">
    <text evidence="1">Belongs to the NAGSA dehydrogenase family. Type 1 subfamily.</text>
</comment>
<gene>
    <name evidence="1" type="primary">argC</name>
    <name type="ordered locus">BHWA1_00539</name>
</gene>
<dbReference type="EC" id="1.2.1.38" evidence="1"/>
<dbReference type="EMBL" id="CP001357">
    <property type="protein sequence ID" value="ACN83035.1"/>
    <property type="molecule type" value="Genomic_DNA"/>
</dbReference>
<dbReference type="RefSeq" id="WP_012670086.1">
    <property type="nucleotide sequence ID" value="NC_012225.1"/>
</dbReference>
<dbReference type="SMR" id="C0QYU7"/>
<dbReference type="STRING" id="565034.BHWA1_00539"/>
<dbReference type="KEGG" id="bhy:BHWA1_00539"/>
<dbReference type="eggNOG" id="COG0002">
    <property type="taxonomic scope" value="Bacteria"/>
</dbReference>
<dbReference type="HOGENOM" id="CLU_006384_0_1_12"/>
<dbReference type="UniPathway" id="UPA00068">
    <property type="reaction ID" value="UER00108"/>
</dbReference>
<dbReference type="Proteomes" id="UP000001803">
    <property type="component" value="Chromosome"/>
</dbReference>
<dbReference type="GO" id="GO:0005737">
    <property type="term" value="C:cytoplasm"/>
    <property type="evidence" value="ECO:0007669"/>
    <property type="project" value="UniProtKB-SubCell"/>
</dbReference>
<dbReference type="GO" id="GO:0003942">
    <property type="term" value="F:N-acetyl-gamma-glutamyl-phosphate reductase activity"/>
    <property type="evidence" value="ECO:0007669"/>
    <property type="project" value="UniProtKB-UniRule"/>
</dbReference>
<dbReference type="GO" id="GO:0051287">
    <property type="term" value="F:NAD binding"/>
    <property type="evidence" value="ECO:0007669"/>
    <property type="project" value="InterPro"/>
</dbReference>
<dbReference type="GO" id="GO:0070401">
    <property type="term" value="F:NADP+ binding"/>
    <property type="evidence" value="ECO:0007669"/>
    <property type="project" value="InterPro"/>
</dbReference>
<dbReference type="GO" id="GO:0006526">
    <property type="term" value="P:L-arginine biosynthetic process"/>
    <property type="evidence" value="ECO:0007669"/>
    <property type="project" value="UniProtKB-UniRule"/>
</dbReference>
<dbReference type="CDD" id="cd23934">
    <property type="entry name" value="AGPR_1_C"/>
    <property type="match status" value="1"/>
</dbReference>
<dbReference type="CDD" id="cd17895">
    <property type="entry name" value="AGPR_1_N"/>
    <property type="match status" value="1"/>
</dbReference>
<dbReference type="FunFam" id="3.30.360.10:FF:000014">
    <property type="entry name" value="N-acetyl-gamma-glutamyl-phosphate reductase"/>
    <property type="match status" value="1"/>
</dbReference>
<dbReference type="Gene3D" id="3.30.360.10">
    <property type="entry name" value="Dihydrodipicolinate Reductase, domain 2"/>
    <property type="match status" value="1"/>
</dbReference>
<dbReference type="Gene3D" id="3.40.50.720">
    <property type="entry name" value="NAD(P)-binding Rossmann-like Domain"/>
    <property type="match status" value="1"/>
</dbReference>
<dbReference type="HAMAP" id="MF_00150">
    <property type="entry name" value="ArgC_type1"/>
    <property type="match status" value="1"/>
</dbReference>
<dbReference type="InterPro" id="IPR023013">
    <property type="entry name" value="AGPR_AS"/>
</dbReference>
<dbReference type="InterPro" id="IPR000706">
    <property type="entry name" value="AGPR_type-1"/>
</dbReference>
<dbReference type="InterPro" id="IPR036291">
    <property type="entry name" value="NAD(P)-bd_dom_sf"/>
</dbReference>
<dbReference type="InterPro" id="IPR050085">
    <property type="entry name" value="NAGSA_dehydrogenase"/>
</dbReference>
<dbReference type="InterPro" id="IPR000534">
    <property type="entry name" value="Semialdehyde_DH_NAD-bd"/>
</dbReference>
<dbReference type="NCBIfam" id="TIGR01850">
    <property type="entry name" value="argC"/>
    <property type="match status" value="1"/>
</dbReference>
<dbReference type="PANTHER" id="PTHR32338:SF10">
    <property type="entry name" value="N-ACETYL-GAMMA-GLUTAMYL-PHOSPHATE REDUCTASE, CHLOROPLASTIC-RELATED"/>
    <property type="match status" value="1"/>
</dbReference>
<dbReference type="PANTHER" id="PTHR32338">
    <property type="entry name" value="N-ACETYL-GAMMA-GLUTAMYL-PHOSPHATE REDUCTASE, CHLOROPLASTIC-RELATED-RELATED"/>
    <property type="match status" value="1"/>
</dbReference>
<dbReference type="Pfam" id="PF01118">
    <property type="entry name" value="Semialdhyde_dh"/>
    <property type="match status" value="1"/>
</dbReference>
<dbReference type="Pfam" id="PF22698">
    <property type="entry name" value="Semialdhyde_dhC_1"/>
    <property type="match status" value="1"/>
</dbReference>
<dbReference type="SMART" id="SM00859">
    <property type="entry name" value="Semialdhyde_dh"/>
    <property type="match status" value="1"/>
</dbReference>
<dbReference type="SUPFAM" id="SSF55347">
    <property type="entry name" value="Glyceraldehyde-3-phosphate dehydrogenase-like, C-terminal domain"/>
    <property type="match status" value="1"/>
</dbReference>
<dbReference type="SUPFAM" id="SSF51735">
    <property type="entry name" value="NAD(P)-binding Rossmann-fold domains"/>
    <property type="match status" value="1"/>
</dbReference>
<dbReference type="PROSITE" id="PS01224">
    <property type="entry name" value="ARGC"/>
    <property type="match status" value="1"/>
</dbReference>
<reference key="1">
    <citation type="journal article" date="2009" name="PLoS ONE">
        <title>Genome sequence of the pathogenic intestinal spirochete Brachyspira hyodysenteriae reveals adaptations to its lifestyle in the porcine large intestine.</title>
        <authorList>
            <person name="Bellgard M.I."/>
            <person name="Wanchanthuek P."/>
            <person name="La T."/>
            <person name="Ryan K."/>
            <person name="Moolhuijzen P."/>
            <person name="Albertyn Z."/>
            <person name="Shaban B."/>
            <person name="Motro Y."/>
            <person name="Dunn D.S."/>
            <person name="Schibeci D."/>
            <person name="Hunter A."/>
            <person name="Barrero R."/>
            <person name="Phillips N.D."/>
            <person name="Hampson D.J."/>
        </authorList>
    </citation>
    <scope>NUCLEOTIDE SEQUENCE [LARGE SCALE GENOMIC DNA]</scope>
    <source>
        <strain>ATCC 49526 / WA1</strain>
    </source>
</reference>
<name>ARGC_BRAHW</name>
<accession>C0QYU7</accession>
<keyword id="KW-0028">Amino-acid biosynthesis</keyword>
<keyword id="KW-0055">Arginine biosynthesis</keyword>
<keyword id="KW-0963">Cytoplasm</keyword>
<keyword id="KW-0521">NADP</keyword>
<keyword id="KW-0560">Oxidoreductase</keyword>
<sequence>MIKVSVIGATGYAGAELIRLLLSHSKVELKNLSSKSFVGKNINEIYPNLNKNLDKLLLDENEIFEDTDVVFASLPAGLSDDIANKCFEKNILFIDLGADFRLDNEEDYKNWYGNEYKYKNLHKEAIYSIPEIIKYDNVYNKKELKNAKIIGNPGCYPTSIGLALAPALVNKFIIKDDIIIDSKSGATGAGRELKLNTHYTECNEAFAPYKIAEHRHTPEIEQTLSNIYGEDIKVTFVPHLLPLNRGIVSTIYAKLENKNIKLKDIHNTYKNFYKDSAFVRVLNIGEIANLKYVKYSNYCDISLHMDDRTNKLIIVSTIDNMVKGAAGQAIQNMNIALGLKEDEGLNFIPPAF</sequence>
<organism>
    <name type="scientific">Brachyspira hyodysenteriae (strain ATCC 49526 / WA1)</name>
    <dbReference type="NCBI Taxonomy" id="565034"/>
    <lineage>
        <taxon>Bacteria</taxon>
        <taxon>Pseudomonadati</taxon>
        <taxon>Spirochaetota</taxon>
        <taxon>Spirochaetia</taxon>
        <taxon>Brachyspirales</taxon>
        <taxon>Brachyspiraceae</taxon>
        <taxon>Brachyspira</taxon>
    </lineage>
</organism>
<evidence type="ECO:0000255" key="1">
    <source>
        <dbReference type="HAMAP-Rule" id="MF_00150"/>
    </source>
</evidence>
<protein>
    <recommendedName>
        <fullName evidence="1">N-acetyl-gamma-glutamyl-phosphate reductase</fullName>
        <shortName evidence="1">AGPR</shortName>
        <ecNumber evidence="1">1.2.1.38</ecNumber>
    </recommendedName>
    <alternativeName>
        <fullName evidence="1">N-acetyl-glutamate semialdehyde dehydrogenase</fullName>
        <shortName evidence="1">NAGSA dehydrogenase</shortName>
    </alternativeName>
</protein>
<feature type="chain" id="PRO_1000123234" description="N-acetyl-gamma-glutamyl-phosphate reductase">
    <location>
        <begin position="1"/>
        <end position="352"/>
    </location>
</feature>
<feature type="active site" evidence="1">
    <location>
        <position position="155"/>
    </location>
</feature>
<proteinExistence type="inferred from homology"/>